<organism>
    <name type="scientific">Shouchella clausii (strain KSM-K16)</name>
    <name type="common">Alkalihalobacillus clausii</name>
    <dbReference type="NCBI Taxonomy" id="66692"/>
    <lineage>
        <taxon>Bacteria</taxon>
        <taxon>Bacillati</taxon>
        <taxon>Bacillota</taxon>
        <taxon>Bacilli</taxon>
        <taxon>Bacillales</taxon>
        <taxon>Bacillaceae</taxon>
        <taxon>Shouchella</taxon>
    </lineage>
</organism>
<dbReference type="EC" id="5.2.1.8" evidence="1"/>
<dbReference type="EMBL" id="AP006627">
    <property type="protein sequence ID" value="BAD65172.1"/>
    <property type="molecule type" value="Genomic_DNA"/>
</dbReference>
<dbReference type="RefSeq" id="WP_011247480.1">
    <property type="nucleotide sequence ID" value="NC_006582.1"/>
</dbReference>
<dbReference type="SMR" id="Q5WEN8"/>
<dbReference type="STRING" id="66692.ABC2637"/>
<dbReference type="KEGG" id="bcl:ABC2637"/>
<dbReference type="eggNOG" id="COG0544">
    <property type="taxonomic scope" value="Bacteria"/>
</dbReference>
<dbReference type="HOGENOM" id="CLU_033058_3_2_9"/>
<dbReference type="OrthoDB" id="9767721at2"/>
<dbReference type="Proteomes" id="UP000001168">
    <property type="component" value="Chromosome"/>
</dbReference>
<dbReference type="GO" id="GO:0005737">
    <property type="term" value="C:cytoplasm"/>
    <property type="evidence" value="ECO:0007669"/>
    <property type="project" value="UniProtKB-SubCell"/>
</dbReference>
<dbReference type="GO" id="GO:0003755">
    <property type="term" value="F:peptidyl-prolyl cis-trans isomerase activity"/>
    <property type="evidence" value="ECO:0007669"/>
    <property type="project" value="UniProtKB-UniRule"/>
</dbReference>
<dbReference type="GO" id="GO:0044183">
    <property type="term" value="F:protein folding chaperone"/>
    <property type="evidence" value="ECO:0007669"/>
    <property type="project" value="TreeGrafter"/>
</dbReference>
<dbReference type="GO" id="GO:0043022">
    <property type="term" value="F:ribosome binding"/>
    <property type="evidence" value="ECO:0007669"/>
    <property type="project" value="TreeGrafter"/>
</dbReference>
<dbReference type="GO" id="GO:0051083">
    <property type="term" value="P:'de novo' cotranslational protein folding"/>
    <property type="evidence" value="ECO:0007669"/>
    <property type="project" value="TreeGrafter"/>
</dbReference>
<dbReference type="GO" id="GO:0051301">
    <property type="term" value="P:cell division"/>
    <property type="evidence" value="ECO:0007669"/>
    <property type="project" value="UniProtKB-KW"/>
</dbReference>
<dbReference type="GO" id="GO:0061077">
    <property type="term" value="P:chaperone-mediated protein folding"/>
    <property type="evidence" value="ECO:0007669"/>
    <property type="project" value="TreeGrafter"/>
</dbReference>
<dbReference type="GO" id="GO:0015031">
    <property type="term" value="P:protein transport"/>
    <property type="evidence" value="ECO:0007669"/>
    <property type="project" value="UniProtKB-UniRule"/>
</dbReference>
<dbReference type="GO" id="GO:0043335">
    <property type="term" value="P:protein unfolding"/>
    <property type="evidence" value="ECO:0007669"/>
    <property type="project" value="TreeGrafter"/>
</dbReference>
<dbReference type="FunFam" id="3.10.50.40:FF:000001">
    <property type="entry name" value="Trigger factor"/>
    <property type="match status" value="1"/>
</dbReference>
<dbReference type="Gene3D" id="3.10.50.40">
    <property type="match status" value="1"/>
</dbReference>
<dbReference type="Gene3D" id="3.30.70.1050">
    <property type="entry name" value="Trigger factor ribosome-binding domain"/>
    <property type="match status" value="1"/>
</dbReference>
<dbReference type="Gene3D" id="1.10.3120.10">
    <property type="entry name" value="Trigger factor, C-terminal domain"/>
    <property type="match status" value="1"/>
</dbReference>
<dbReference type="HAMAP" id="MF_00303">
    <property type="entry name" value="Trigger_factor_Tig"/>
    <property type="match status" value="1"/>
</dbReference>
<dbReference type="InterPro" id="IPR046357">
    <property type="entry name" value="PPIase_dom_sf"/>
</dbReference>
<dbReference type="InterPro" id="IPR001179">
    <property type="entry name" value="PPIase_FKBP_dom"/>
</dbReference>
<dbReference type="InterPro" id="IPR005215">
    <property type="entry name" value="Trig_fac"/>
</dbReference>
<dbReference type="InterPro" id="IPR008880">
    <property type="entry name" value="Trigger_fac_C"/>
</dbReference>
<dbReference type="InterPro" id="IPR037041">
    <property type="entry name" value="Trigger_fac_C_sf"/>
</dbReference>
<dbReference type="InterPro" id="IPR008881">
    <property type="entry name" value="Trigger_fac_ribosome-bd_bac"/>
</dbReference>
<dbReference type="InterPro" id="IPR036611">
    <property type="entry name" value="Trigger_fac_ribosome-bd_sf"/>
</dbReference>
<dbReference type="InterPro" id="IPR027304">
    <property type="entry name" value="Trigger_fact/SurA_dom_sf"/>
</dbReference>
<dbReference type="NCBIfam" id="TIGR00115">
    <property type="entry name" value="tig"/>
    <property type="match status" value="1"/>
</dbReference>
<dbReference type="PANTHER" id="PTHR30560">
    <property type="entry name" value="TRIGGER FACTOR CHAPERONE AND PEPTIDYL-PROLYL CIS/TRANS ISOMERASE"/>
    <property type="match status" value="1"/>
</dbReference>
<dbReference type="PANTHER" id="PTHR30560:SF3">
    <property type="entry name" value="TRIGGER FACTOR-LIKE PROTEIN TIG, CHLOROPLASTIC"/>
    <property type="match status" value="1"/>
</dbReference>
<dbReference type="Pfam" id="PF00254">
    <property type="entry name" value="FKBP_C"/>
    <property type="match status" value="1"/>
</dbReference>
<dbReference type="Pfam" id="PF05698">
    <property type="entry name" value="Trigger_C"/>
    <property type="match status" value="1"/>
</dbReference>
<dbReference type="Pfam" id="PF05697">
    <property type="entry name" value="Trigger_N"/>
    <property type="match status" value="1"/>
</dbReference>
<dbReference type="PIRSF" id="PIRSF003095">
    <property type="entry name" value="Trigger_factor"/>
    <property type="match status" value="1"/>
</dbReference>
<dbReference type="SUPFAM" id="SSF54534">
    <property type="entry name" value="FKBP-like"/>
    <property type="match status" value="1"/>
</dbReference>
<dbReference type="SUPFAM" id="SSF109998">
    <property type="entry name" value="Triger factor/SurA peptide-binding domain-like"/>
    <property type="match status" value="1"/>
</dbReference>
<dbReference type="SUPFAM" id="SSF102735">
    <property type="entry name" value="Trigger factor ribosome-binding domain"/>
    <property type="match status" value="1"/>
</dbReference>
<dbReference type="PROSITE" id="PS50059">
    <property type="entry name" value="FKBP_PPIASE"/>
    <property type="match status" value="1"/>
</dbReference>
<accession>Q5WEN8</accession>
<proteinExistence type="inferred from homology"/>
<evidence type="ECO:0000255" key="1">
    <source>
        <dbReference type="HAMAP-Rule" id="MF_00303"/>
    </source>
</evidence>
<reference key="1">
    <citation type="submission" date="2003-10" db="EMBL/GenBank/DDBJ databases">
        <title>The complete genome sequence of the alkaliphilic Bacillus clausii KSM-K16.</title>
        <authorList>
            <person name="Takaki Y."/>
            <person name="Kageyama Y."/>
            <person name="Shimamura S."/>
            <person name="Suzuki H."/>
            <person name="Nishi S."/>
            <person name="Hatada Y."/>
            <person name="Kawai S."/>
            <person name="Ito S."/>
            <person name="Horikoshi K."/>
        </authorList>
    </citation>
    <scope>NUCLEOTIDE SEQUENCE [LARGE SCALE GENOMIC DNA]</scope>
    <source>
        <strain>KSM-K16</strain>
    </source>
</reference>
<name>TIG_SHOC1</name>
<feature type="chain" id="PRO_0000179312" description="Trigger factor">
    <location>
        <begin position="1"/>
        <end position="434"/>
    </location>
</feature>
<feature type="domain" description="PPIase FKBP-type" evidence="1">
    <location>
        <begin position="163"/>
        <end position="248"/>
    </location>
</feature>
<sequence length="434" mass="48596">MSAKWEKTEENTGVLTIEVEADKVNDALDKAFKKVVKKVNVPGFRKGKVPRGLFEKQFGVESLYQDAIDILLPEAYANAVEETGIYPVDRPEIDVESIGKNEPLIVKATVTVKPEVKLGDYKGLEVEVPSTDVTDEDVEAELKKLQEQHAELVVLEEGEIANGDTAVIDFAGYVDGEAFEGGTAENYSLEIGSNSFIPGFEEQLVGLKSGEEKDVEVTFPEEYHAEELAGKPATFKVKVHDIKRKELPELDDEFAKDVNEKVETLDELKNELRSTLEEQKKTASENAVRDSLLEKAAEQAEINVPEAMIETETDRMLQEFGQRLQAQGMNLDMYFQFSGQTEEDMRNQFKEDAEKRVRVNLTLEAIAEAENVEVSEEEIEEEFQKMADMYQRSVEEIKALLAAQGGTDNVKGDLKLRKAIDVLVENSKEVTTES</sequence>
<comment type="function">
    <text evidence="1">Involved in protein export. Acts as a chaperone by maintaining the newly synthesized protein in an open conformation. Functions as a peptidyl-prolyl cis-trans isomerase.</text>
</comment>
<comment type="catalytic activity">
    <reaction evidence="1">
        <text>[protein]-peptidylproline (omega=180) = [protein]-peptidylproline (omega=0)</text>
        <dbReference type="Rhea" id="RHEA:16237"/>
        <dbReference type="Rhea" id="RHEA-COMP:10747"/>
        <dbReference type="Rhea" id="RHEA-COMP:10748"/>
        <dbReference type="ChEBI" id="CHEBI:83833"/>
        <dbReference type="ChEBI" id="CHEBI:83834"/>
        <dbReference type="EC" id="5.2.1.8"/>
    </reaction>
</comment>
<comment type="subcellular location">
    <subcellularLocation>
        <location>Cytoplasm</location>
    </subcellularLocation>
    <text evidence="1">About half TF is bound to the ribosome near the polypeptide exit tunnel while the other half is free in the cytoplasm.</text>
</comment>
<comment type="domain">
    <text evidence="1">Consists of 3 domains; the N-terminus binds the ribosome, the middle domain has PPIase activity, while the C-terminus has intrinsic chaperone activity on its own.</text>
</comment>
<comment type="similarity">
    <text evidence="1">Belongs to the FKBP-type PPIase family. Tig subfamily.</text>
</comment>
<gene>
    <name evidence="1" type="primary">tig</name>
    <name type="ordered locus">ABC2637</name>
</gene>
<protein>
    <recommendedName>
        <fullName evidence="1">Trigger factor</fullName>
        <shortName evidence="1">TF</shortName>
        <ecNumber evidence="1">5.2.1.8</ecNumber>
    </recommendedName>
    <alternativeName>
        <fullName evidence="1">PPIase</fullName>
    </alternativeName>
</protein>
<keyword id="KW-0131">Cell cycle</keyword>
<keyword id="KW-0132">Cell division</keyword>
<keyword id="KW-0143">Chaperone</keyword>
<keyword id="KW-0963">Cytoplasm</keyword>
<keyword id="KW-0413">Isomerase</keyword>
<keyword id="KW-1185">Reference proteome</keyword>
<keyword id="KW-0697">Rotamase</keyword>